<protein>
    <recommendedName>
        <fullName evidence="1">Cytidylate kinase</fullName>
        <shortName evidence="1">CK</shortName>
        <ecNumber evidence="1">2.7.4.25</ecNumber>
    </recommendedName>
    <alternativeName>
        <fullName evidence="1">Cytidine monophosphate kinase</fullName>
        <shortName evidence="1">CMP kinase</shortName>
    </alternativeName>
</protein>
<name>KCY_BRUMB</name>
<accession>C0RG91</accession>
<gene>
    <name evidence="1" type="primary">cmk</name>
    <name type="ordered locus">BMEA_A0027</name>
</gene>
<keyword id="KW-0067">ATP-binding</keyword>
<keyword id="KW-0963">Cytoplasm</keyword>
<keyword id="KW-0418">Kinase</keyword>
<keyword id="KW-0547">Nucleotide-binding</keyword>
<keyword id="KW-0808">Transferase</keyword>
<organism>
    <name type="scientific">Brucella melitensis biotype 2 (strain ATCC 23457)</name>
    <dbReference type="NCBI Taxonomy" id="546272"/>
    <lineage>
        <taxon>Bacteria</taxon>
        <taxon>Pseudomonadati</taxon>
        <taxon>Pseudomonadota</taxon>
        <taxon>Alphaproteobacteria</taxon>
        <taxon>Hyphomicrobiales</taxon>
        <taxon>Brucellaceae</taxon>
        <taxon>Brucella/Ochrobactrum group</taxon>
        <taxon>Brucella</taxon>
    </lineage>
</organism>
<proteinExistence type="inferred from homology"/>
<evidence type="ECO:0000255" key="1">
    <source>
        <dbReference type="HAMAP-Rule" id="MF_00238"/>
    </source>
</evidence>
<feature type="chain" id="PRO_1000125275" description="Cytidylate kinase">
    <location>
        <begin position="1"/>
        <end position="219"/>
    </location>
</feature>
<feature type="binding site" evidence="1">
    <location>
        <begin position="15"/>
        <end position="23"/>
    </location>
    <ligand>
        <name>ATP</name>
        <dbReference type="ChEBI" id="CHEBI:30616"/>
    </ligand>
</feature>
<sequence>MKSFVVAPFIVAIDGPAASGKGTLARRIATHYGMPHLDTGLTYRAVAKALLDKGLPLDDEALATDAALSLDLLAMDKAVLSAHAIGEAASKVAVMPAVRRALVEAQRHFANALPSSVLDGRDIGTVVCPDAAIKLFVTASPEVRARRRFDEVLARGDTADFAEILADLKKRDERDMNRTDSPLRPAEDAHLLDTSEMSIEAAFLAAKKLIDHALAQHRG</sequence>
<dbReference type="EC" id="2.7.4.25" evidence="1"/>
<dbReference type="EMBL" id="CP001488">
    <property type="protein sequence ID" value="ACN99848.1"/>
    <property type="molecule type" value="Genomic_DNA"/>
</dbReference>
<dbReference type="RefSeq" id="WP_004685325.1">
    <property type="nucleotide sequence ID" value="NC_012441.1"/>
</dbReference>
<dbReference type="SMR" id="C0RG91"/>
<dbReference type="GeneID" id="97534537"/>
<dbReference type="KEGG" id="bmi:BMEA_A0027"/>
<dbReference type="HOGENOM" id="CLU_079959_0_1_5"/>
<dbReference type="Proteomes" id="UP000001748">
    <property type="component" value="Chromosome I"/>
</dbReference>
<dbReference type="GO" id="GO:0005737">
    <property type="term" value="C:cytoplasm"/>
    <property type="evidence" value="ECO:0007669"/>
    <property type="project" value="UniProtKB-SubCell"/>
</dbReference>
<dbReference type="GO" id="GO:0005524">
    <property type="term" value="F:ATP binding"/>
    <property type="evidence" value="ECO:0007669"/>
    <property type="project" value="UniProtKB-UniRule"/>
</dbReference>
<dbReference type="GO" id="GO:0036430">
    <property type="term" value="F:CMP kinase activity"/>
    <property type="evidence" value="ECO:0007669"/>
    <property type="project" value="RHEA"/>
</dbReference>
<dbReference type="GO" id="GO:0036431">
    <property type="term" value="F:dCMP kinase activity"/>
    <property type="evidence" value="ECO:0007669"/>
    <property type="project" value="RHEA"/>
</dbReference>
<dbReference type="GO" id="GO:0006220">
    <property type="term" value="P:pyrimidine nucleotide metabolic process"/>
    <property type="evidence" value="ECO:0007669"/>
    <property type="project" value="UniProtKB-UniRule"/>
</dbReference>
<dbReference type="CDD" id="cd02020">
    <property type="entry name" value="CMPK"/>
    <property type="match status" value="1"/>
</dbReference>
<dbReference type="Gene3D" id="3.40.50.300">
    <property type="entry name" value="P-loop containing nucleotide triphosphate hydrolases"/>
    <property type="match status" value="1"/>
</dbReference>
<dbReference type="HAMAP" id="MF_00238">
    <property type="entry name" value="Cytidyl_kinase_type1"/>
    <property type="match status" value="1"/>
</dbReference>
<dbReference type="InterPro" id="IPR003136">
    <property type="entry name" value="Cytidylate_kin"/>
</dbReference>
<dbReference type="InterPro" id="IPR011994">
    <property type="entry name" value="Cytidylate_kinase_dom"/>
</dbReference>
<dbReference type="InterPro" id="IPR027417">
    <property type="entry name" value="P-loop_NTPase"/>
</dbReference>
<dbReference type="NCBIfam" id="TIGR00017">
    <property type="entry name" value="cmk"/>
    <property type="match status" value="1"/>
</dbReference>
<dbReference type="Pfam" id="PF02224">
    <property type="entry name" value="Cytidylate_kin"/>
    <property type="match status" value="1"/>
</dbReference>
<dbReference type="SUPFAM" id="SSF52540">
    <property type="entry name" value="P-loop containing nucleoside triphosphate hydrolases"/>
    <property type="match status" value="1"/>
</dbReference>
<comment type="catalytic activity">
    <reaction evidence="1">
        <text>CMP + ATP = CDP + ADP</text>
        <dbReference type="Rhea" id="RHEA:11600"/>
        <dbReference type="ChEBI" id="CHEBI:30616"/>
        <dbReference type="ChEBI" id="CHEBI:58069"/>
        <dbReference type="ChEBI" id="CHEBI:60377"/>
        <dbReference type="ChEBI" id="CHEBI:456216"/>
        <dbReference type="EC" id="2.7.4.25"/>
    </reaction>
</comment>
<comment type="catalytic activity">
    <reaction evidence="1">
        <text>dCMP + ATP = dCDP + ADP</text>
        <dbReference type="Rhea" id="RHEA:25094"/>
        <dbReference type="ChEBI" id="CHEBI:30616"/>
        <dbReference type="ChEBI" id="CHEBI:57566"/>
        <dbReference type="ChEBI" id="CHEBI:58593"/>
        <dbReference type="ChEBI" id="CHEBI:456216"/>
        <dbReference type="EC" id="2.7.4.25"/>
    </reaction>
</comment>
<comment type="subcellular location">
    <subcellularLocation>
        <location evidence="1">Cytoplasm</location>
    </subcellularLocation>
</comment>
<comment type="similarity">
    <text evidence="1">Belongs to the cytidylate kinase family. Type 1 subfamily.</text>
</comment>
<reference key="1">
    <citation type="submission" date="2009-03" db="EMBL/GenBank/DDBJ databases">
        <title>Brucella melitensis ATCC 23457 whole genome shotgun sequencing project.</title>
        <authorList>
            <person name="Setubal J.C."/>
            <person name="Boyle S."/>
            <person name="Crasta O.R."/>
            <person name="Gillespie J.J."/>
            <person name="Kenyon R.W."/>
            <person name="Lu J."/>
            <person name="Mane S."/>
            <person name="Nagrani S."/>
            <person name="Shallom J.M."/>
            <person name="Shallom S."/>
            <person name="Shukla M."/>
            <person name="Snyder E.E."/>
            <person name="Sobral B.W."/>
            <person name="Wattam A.R."/>
            <person name="Will R."/>
            <person name="Williams K."/>
            <person name="Yoo H."/>
            <person name="Munk C."/>
            <person name="Tapia R."/>
            <person name="Han C."/>
            <person name="Detter J.C."/>
            <person name="Bruce D."/>
            <person name="Brettin T.S."/>
        </authorList>
    </citation>
    <scope>NUCLEOTIDE SEQUENCE [LARGE SCALE GENOMIC DNA]</scope>
    <source>
        <strain>ATCC 23457</strain>
    </source>
</reference>